<reference key="1">
    <citation type="journal article" date="2006" name="Proc. Natl. Acad. Sci. U.S.A.">
        <title>Evolution of sensory complexity recorded in a myxobacterial genome.</title>
        <authorList>
            <person name="Goldman B.S."/>
            <person name="Nierman W.C."/>
            <person name="Kaiser D."/>
            <person name="Slater S.C."/>
            <person name="Durkin A.S."/>
            <person name="Eisen J.A."/>
            <person name="Ronning C.M."/>
            <person name="Barbazuk W.B."/>
            <person name="Blanchard M."/>
            <person name="Field C."/>
            <person name="Halling C."/>
            <person name="Hinkle G."/>
            <person name="Iartchuk O."/>
            <person name="Kim H.S."/>
            <person name="Mackenzie C."/>
            <person name="Madupu R."/>
            <person name="Miller N."/>
            <person name="Shvartsbeyn A."/>
            <person name="Sullivan S.A."/>
            <person name="Vaudin M."/>
            <person name="Wiegand R."/>
            <person name="Kaplan H.B."/>
        </authorList>
    </citation>
    <scope>NUCLEOTIDE SEQUENCE [LARGE SCALE GENOMIC DNA]</scope>
    <source>
        <strain>DK1622</strain>
    </source>
</reference>
<feature type="chain" id="PRO_0000261952" description="Nucleotide-binding protein MXAN_1478">
    <location>
        <begin position="1"/>
        <end position="165"/>
    </location>
</feature>
<dbReference type="EMBL" id="CP000113">
    <property type="protein sequence ID" value="ABF87109.1"/>
    <property type="molecule type" value="Genomic_DNA"/>
</dbReference>
<dbReference type="RefSeq" id="WP_011551594.1">
    <property type="nucleotide sequence ID" value="NC_008095.1"/>
</dbReference>
<dbReference type="SMR" id="Q1DC88"/>
<dbReference type="STRING" id="246197.MXAN_1478"/>
<dbReference type="EnsemblBacteria" id="ABF87109">
    <property type="protein sequence ID" value="ABF87109"/>
    <property type="gene ID" value="MXAN_1478"/>
</dbReference>
<dbReference type="GeneID" id="41358924"/>
<dbReference type="KEGG" id="mxa:MXAN_1478"/>
<dbReference type="eggNOG" id="COG1666">
    <property type="taxonomic scope" value="Bacteria"/>
</dbReference>
<dbReference type="HOGENOM" id="CLU_099839_1_0_7"/>
<dbReference type="OrthoDB" id="9801447at2"/>
<dbReference type="Proteomes" id="UP000002402">
    <property type="component" value="Chromosome"/>
</dbReference>
<dbReference type="GO" id="GO:0005829">
    <property type="term" value="C:cytosol"/>
    <property type="evidence" value="ECO:0007669"/>
    <property type="project" value="TreeGrafter"/>
</dbReference>
<dbReference type="GO" id="GO:0000166">
    <property type="term" value="F:nucleotide binding"/>
    <property type="evidence" value="ECO:0007669"/>
    <property type="project" value="TreeGrafter"/>
</dbReference>
<dbReference type="CDD" id="cd11740">
    <property type="entry name" value="YajQ_like"/>
    <property type="match status" value="1"/>
</dbReference>
<dbReference type="Gene3D" id="3.30.70.860">
    <property type="match status" value="1"/>
</dbReference>
<dbReference type="Gene3D" id="3.30.70.990">
    <property type="entry name" value="YajQ-like, domain 2"/>
    <property type="match status" value="1"/>
</dbReference>
<dbReference type="HAMAP" id="MF_00632">
    <property type="entry name" value="YajQ"/>
    <property type="match status" value="1"/>
</dbReference>
<dbReference type="InterPro" id="IPR007551">
    <property type="entry name" value="DUF520"/>
</dbReference>
<dbReference type="InterPro" id="IPR035571">
    <property type="entry name" value="UPF0234-like_C"/>
</dbReference>
<dbReference type="InterPro" id="IPR035570">
    <property type="entry name" value="UPF0234_N"/>
</dbReference>
<dbReference type="InterPro" id="IPR036183">
    <property type="entry name" value="YajQ-like_sf"/>
</dbReference>
<dbReference type="NCBIfam" id="NF003819">
    <property type="entry name" value="PRK05412.1"/>
    <property type="match status" value="1"/>
</dbReference>
<dbReference type="PANTHER" id="PTHR30476">
    <property type="entry name" value="UPF0234 PROTEIN YAJQ"/>
    <property type="match status" value="1"/>
</dbReference>
<dbReference type="PANTHER" id="PTHR30476:SF0">
    <property type="entry name" value="UPF0234 PROTEIN YAJQ"/>
    <property type="match status" value="1"/>
</dbReference>
<dbReference type="Pfam" id="PF04461">
    <property type="entry name" value="DUF520"/>
    <property type="match status" value="1"/>
</dbReference>
<dbReference type="SUPFAM" id="SSF89963">
    <property type="entry name" value="YajQ-like"/>
    <property type="match status" value="2"/>
</dbReference>
<evidence type="ECO:0000255" key="1">
    <source>
        <dbReference type="HAMAP-Rule" id="MF_00632"/>
    </source>
</evidence>
<keyword id="KW-0547">Nucleotide-binding</keyword>
<keyword id="KW-1185">Reference proteome</keyword>
<proteinExistence type="inferred from homology"/>
<sequence length="165" mass="18609">MPSFDVVSKIDLAELDNAVNQTKKELSTRYDFQGTHADVVLAPDNTAITVKANSEDRVQAAKEVLLTKLAKRNISLFALEYGDIEKTGLHNVKQVIKLQQGIPVEKSKELVKLLKDSKMKVQGSIQADQLRVTGKNRDDLQAAIALFRKEQDRLKLDMQFINFRD</sequence>
<gene>
    <name type="ordered locus">MXAN_1478</name>
</gene>
<comment type="function">
    <text evidence="1">Nucleotide-binding protein.</text>
</comment>
<comment type="similarity">
    <text evidence="1">Belongs to the YajQ family.</text>
</comment>
<accession>Q1DC88</accession>
<organism>
    <name type="scientific">Myxococcus xanthus (strain DK1622)</name>
    <dbReference type="NCBI Taxonomy" id="246197"/>
    <lineage>
        <taxon>Bacteria</taxon>
        <taxon>Pseudomonadati</taxon>
        <taxon>Myxococcota</taxon>
        <taxon>Myxococcia</taxon>
        <taxon>Myxococcales</taxon>
        <taxon>Cystobacterineae</taxon>
        <taxon>Myxococcaceae</taxon>
        <taxon>Myxococcus</taxon>
    </lineage>
</organism>
<protein>
    <recommendedName>
        <fullName evidence="1">Nucleotide-binding protein MXAN_1478</fullName>
    </recommendedName>
</protein>
<name>Y1478_MYXXD</name>